<gene>
    <name type="primary">RPP25L</name>
</gene>
<evidence type="ECO:0000250" key="1"/>
<evidence type="ECO:0000256" key="2">
    <source>
        <dbReference type="SAM" id="MobiDB-lite"/>
    </source>
</evidence>
<evidence type="ECO:0000305" key="3"/>
<dbReference type="EMBL" id="BC112539">
    <property type="protein sequence ID" value="AAI12540.1"/>
    <property type="molecule type" value="mRNA"/>
</dbReference>
<dbReference type="RefSeq" id="NP_001039576.1">
    <property type="nucleotide sequence ID" value="NM_001046111.1"/>
</dbReference>
<dbReference type="RefSeq" id="XP_005210372.1">
    <property type="nucleotide sequence ID" value="XM_005210315.5"/>
</dbReference>
<dbReference type="RefSeq" id="XP_005210373.1">
    <property type="nucleotide sequence ID" value="XM_005210316.4"/>
</dbReference>
<dbReference type="RefSeq" id="XP_005210374.1">
    <property type="nucleotide sequence ID" value="XM_005210317.5"/>
</dbReference>
<dbReference type="SMR" id="Q2KIR4"/>
<dbReference type="FunCoup" id="Q2KIR4">
    <property type="interactions" value="1768"/>
</dbReference>
<dbReference type="STRING" id="9913.ENSBTAP00000021677"/>
<dbReference type="PaxDb" id="9913-ENSBTAP00000021677"/>
<dbReference type="Ensembl" id="ENSBTAT00000021677.4">
    <property type="protein sequence ID" value="ENSBTAP00000021677.2"/>
    <property type="gene ID" value="ENSBTAG00000016295.4"/>
</dbReference>
<dbReference type="GeneID" id="512203"/>
<dbReference type="KEGG" id="bta:512203"/>
<dbReference type="CTD" id="138716"/>
<dbReference type="VEuPathDB" id="HostDB:ENSBTAG00000016295"/>
<dbReference type="VGNC" id="VGNC:34122">
    <property type="gene designation" value="RPP25L"/>
</dbReference>
<dbReference type="eggNOG" id="KOG2567">
    <property type="taxonomic scope" value="Eukaryota"/>
</dbReference>
<dbReference type="GeneTree" id="ENSGT00390000002564"/>
<dbReference type="HOGENOM" id="CLU_096311_0_0_1"/>
<dbReference type="InParanoid" id="Q2KIR4"/>
<dbReference type="OMA" id="RNLPVIW"/>
<dbReference type="OrthoDB" id="424402at2759"/>
<dbReference type="TreeFam" id="TF325688"/>
<dbReference type="Proteomes" id="UP000009136">
    <property type="component" value="Chromosome 8"/>
</dbReference>
<dbReference type="Bgee" id="ENSBTAG00000016295">
    <property type="expression patterns" value="Expressed in choroid plexus and 102 other cell types or tissues"/>
</dbReference>
<dbReference type="GO" id="GO:0005634">
    <property type="term" value="C:nucleus"/>
    <property type="evidence" value="ECO:0007669"/>
    <property type="project" value="UniProtKB-SubCell"/>
</dbReference>
<dbReference type="GO" id="GO:0000172">
    <property type="term" value="C:ribonuclease MRP complex"/>
    <property type="evidence" value="ECO:0000318"/>
    <property type="project" value="GO_Central"/>
</dbReference>
<dbReference type="GO" id="GO:0003723">
    <property type="term" value="F:RNA binding"/>
    <property type="evidence" value="ECO:0000318"/>
    <property type="project" value="GO_Central"/>
</dbReference>
<dbReference type="GO" id="GO:0001682">
    <property type="term" value="P:tRNA 5'-leader removal"/>
    <property type="evidence" value="ECO:0000318"/>
    <property type="project" value="GO_Central"/>
</dbReference>
<dbReference type="FunFam" id="3.30.110.20:FF:000004">
    <property type="entry name" value="Ribonuclease P protein subunit p25-like protein"/>
    <property type="match status" value="1"/>
</dbReference>
<dbReference type="Gene3D" id="3.30.110.20">
    <property type="entry name" value="Alba-like domain"/>
    <property type="match status" value="1"/>
</dbReference>
<dbReference type="InterPro" id="IPR036882">
    <property type="entry name" value="Alba-like_dom_sf"/>
</dbReference>
<dbReference type="InterPro" id="IPR051958">
    <property type="entry name" value="Alba-like_NAB"/>
</dbReference>
<dbReference type="InterPro" id="IPR002775">
    <property type="entry name" value="DNA/RNA-bd_Alba-like"/>
</dbReference>
<dbReference type="PANTHER" id="PTHR13516:SF8">
    <property type="entry name" value="RIBONUCLEASE P PROTEIN SUBUNIT P25-LIKE PROTEIN"/>
    <property type="match status" value="1"/>
</dbReference>
<dbReference type="PANTHER" id="PTHR13516">
    <property type="entry name" value="RIBONUCLEASE P SUBUNIT P25"/>
    <property type="match status" value="1"/>
</dbReference>
<dbReference type="Pfam" id="PF01918">
    <property type="entry name" value="Alba"/>
    <property type="match status" value="1"/>
</dbReference>
<dbReference type="SUPFAM" id="SSF82704">
    <property type="entry name" value="AlbA-like"/>
    <property type="match status" value="1"/>
</dbReference>
<proteinExistence type="evidence at transcript level"/>
<sequence>MEHYRKAGSVELPAPSPMPQLPPDTLEMRVRAGSKIRNLLGLALERLEGGSARHVVFSGSGRAAGKAVSCAEIVKRRVPGLYQLTKLRFLQTEDSWVPTSPDTGLDPLTVRSHVPAVWVLLSRDPLDPNEYGYQPPGAPPDLGPTPASSCGPQPRRRARDTRF</sequence>
<reference key="1">
    <citation type="submission" date="2006-01" db="EMBL/GenBank/DDBJ databases">
        <authorList>
            <consortium name="NIH - Mammalian Gene Collection (MGC) project"/>
        </authorList>
    </citation>
    <scope>NUCLEOTIDE SEQUENCE [LARGE SCALE MRNA]</scope>
    <source>
        <strain>Hereford</strain>
        <tissue>Testis</tissue>
    </source>
</reference>
<organism>
    <name type="scientific">Bos taurus</name>
    <name type="common">Bovine</name>
    <dbReference type="NCBI Taxonomy" id="9913"/>
    <lineage>
        <taxon>Eukaryota</taxon>
        <taxon>Metazoa</taxon>
        <taxon>Chordata</taxon>
        <taxon>Craniata</taxon>
        <taxon>Vertebrata</taxon>
        <taxon>Euteleostomi</taxon>
        <taxon>Mammalia</taxon>
        <taxon>Eutheria</taxon>
        <taxon>Laurasiatheria</taxon>
        <taxon>Artiodactyla</taxon>
        <taxon>Ruminantia</taxon>
        <taxon>Pecora</taxon>
        <taxon>Bovidae</taxon>
        <taxon>Bovinae</taxon>
        <taxon>Bos</taxon>
    </lineage>
</organism>
<accession>Q2KIR4</accession>
<comment type="function">
    <text evidence="1">May be a component of ribonuclease P or MRP.</text>
</comment>
<comment type="subcellular location">
    <subcellularLocation>
        <location evidence="1">Nucleus</location>
    </subcellularLocation>
</comment>
<comment type="similarity">
    <text evidence="3">Belongs to the histone-like Alba family.</text>
</comment>
<name>RP25L_BOVIN</name>
<keyword id="KW-0539">Nucleus</keyword>
<keyword id="KW-1185">Reference proteome</keyword>
<feature type="chain" id="PRO_0000271031" description="Ribonuclease P protein subunit p25-like protein">
    <location>
        <begin position="1"/>
        <end position="163"/>
    </location>
</feature>
<feature type="region of interest" description="Disordered" evidence="2">
    <location>
        <begin position="1"/>
        <end position="22"/>
    </location>
</feature>
<feature type="region of interest" description="Disordered" evidence="2">
    <location>
        <begin position="129"/>
        <end position="163"/>
    </location>
</feature>
<feature type="compositionally biased region" description="Basic residues" evidence="2">
    <location>
        <begin position="154"/>
        <end position="163"/>
    </location>
</feature>
<protein>
    <recommendedName>
        <fullName>Ribonuclease P protein subunit p25-like protein</fullName>
        <shortName>RNase P protein subunit-like p25</shortName>
    </recommendedName>
    <alternativeName>
        <fullName>Rpp25-like protein</fullName>
    </alternativeName>
</protein>